<organism>
    <name type="scientific">Acidothermus cellulolyticus (strain ATCC 43068 / DSM 8971 / 11B)</name>
    <dbReference type="NCBI Taxonomy" id="351607"/>
    <lineage>
        <taxon>Bacteria</taxon>
        <taxon>Bacillati</taxon>
        <taxon>Actinomycetota</taxon>
        <taxon>Actinomycetes</taxon>
        <taxon>Acidothermales</taxon>
        <taxon>Acidothermaceae</taxon>
        <taxon>Acidothermus</taxon>
    </lineage>
</organism>
<reference key="1">
    <citation type="journal article" date="2009" name="Genome Res.">
        <title>Complete genome of the cellulolytic thermophile Acidothermus cellulolyticus 11B provides insights into its ecophysiological and evolutionary adaptations.</title>
        <authorList>
            <person name="Barabote R.D."/>
            <person name="Xie G."/>
            <person name="Leu D.H."/>
            <person name="Normand P."/>
            <person name="Necsulea A."/>
            <person name="Daubin V."/>
            <person name="Medigue C."/>
            <person name="Adney W.S."/>
            <person name="Xu X.C."/>
            <person name="Lapidus A."/>
            <person name="Parales R.E."/>
            <person name="Detter C."/>
            <person name="Pujic P."/>
            <person name="Bruce D."/>
            <person name="Lavire C."/>
            <person name="Challacombe J.F."/>
            <person name="Brettin T.S."/>
            <person name="Berry A.M."/>
        </authorList>
    </citation>
    <scope>NUCLEOTIDE SEQUENCE [LARGE SCALE GENOMIC DNA]</scope>
    <source>
        <strain>ATCC 43068 / DSM 8971 / 11B</strain>
    </source>
</reference>
<evidence type="ECO:0000255" key="1">
    <source>
        <dbReference type="HAMAP-Rule" id="MF_00270"/>
    </source>
</evidence>
<evidence type="ECO:0000305" key="2"/>
<gene>
    <name evidence="1" type="primary">rpsR</name>
    <name type="ordered locus">Acel_2131</name>
</gene>
<keyword id="KW-1185">Reference proteome</keyword>
<keyword id="KW-0687">Ribonucleoprotein</keyword>
<keyword id="KW-0689">Ribosomal protein</keyword>
<keyword id="KW-0694">RNA-binding</keyword>
<keyword id="KW-0699">rRNA-binding</keyword>
<accession>A0LWU3</accession>
<comment type="function">
    <text evidence="1">Binds as a heterodimer with protein bS6 to the central domain of the 16S rRNA, where it helps stabilize the platform of the 30S subunit.</text>
</comment>
<comment type="subunit">
    <text evidence="1">Part of the 30S ribosomal subunit. Forms a tight heterodimer with protein bS6.</text>
</comment>
<comment type="similarity">
    <text evidence="1">Belongs to the bacterial ribosomal protein bS18 family.</text>
</comment>
<feature type="chain" id="PRO_1000003434" description="Small ribosomal subunit protein bS18">
    <location>
        <begin position="1"/>
        <end position="78"/>
    </location>
</feature>
<proteinExistence type="inferred from homology"/>
<protein>
    <recommendedName>
        <fullName evidence="1">Small ribosomal subunit protein bS18</fullName>
    </recommendedName>
    <alternativeName>
        <fullName evidence="2">30S ribosomal protein S18</fullName>
    </alternativeName>
</protein>
<name>RS18_ACIC1</name>
<dbReference type="EMBL" id="CP000481">
    <property type="protein sequence ID" value="ABK53903.1"/>
    <property type="molecule type" value="Genomic_DNA"/>
</dbReference>
<dbReference type="RefSeq" id="WP_011720966.1">
    <property type="nucleotide sequence ID" value="NC_008578.1"/>
</dbReference>
<dbReference type="SMR" id="A0LWU3"/>
<dbReference type="FunCoup" id="A0LWU3">
    <property type="interactions" value="211"/>
</dbReference>
<dbReference type="STRING" id="351607.Acel_2131"/>
<dbReference type="KEGG" id="ace:Acel_2131"/>
<dbReference type="eggNOG" id="COG0238">
    <property type="taxonomic scope" value="Bacteria"/>
</dbReference>
<dbReference type="HOGENOM" id="CLU_148710_2_2_11"/>
<dbReference type="InParanoid" id="A0LWU3"/>
<dbReference type="OrthoDB" id="9812008at2"/>
<dbReference type="Proteomes" id="UP000008221">
    <property type="component" value="Chromosome"/>
</dbReference>
<dbReference type="GO" id="GO:0022627">
    <property type="term" value="C:cytosolic small ribosomal subunit"/>
    <property type="evidence" value="ECO:0007669"/>
    <property type="project" value="TreeGrafter"/>
</dbReference>
<dbReference type="GO" id="GO:0070181">
    <property type="term" value="F:small ribosomal subunit rRNA binding"/>
    <property type="evidence" value="ECO:0007669"/>
    <property type="project" value="TreeGrafter"/>
</dbReference>
<dbReference type="GO" id="GO:0003735">
    <property type="term" value="F:structural constituent of ribosome"/>
    <property type="evidence" value="ECO:0007669"/>
    <property type="project" value="InterPro"/>
</dbReference>
<dbReference type="GO" id="GO:0006412">
    <property type="term" value="P:translation"/>
    <property type="evidence" value="ECO:0007669"/>
    <property type="project" value="UniProtKB-UniRule"/>
</dbReference>
<dbReference type="FunFam" id="4.10.640.10:FF:000004">
    <property type="entry name" value="30S ribosomal protein S18"/>
    <property type="match status" value="1"/>
</dbReference>
<dbReference type="Gene3D" id="4.10.640.10">
    <property type="entry name" value="Ribosomal protein S18"/>
    <property type="match status" value="1"/>
</dbReference>
<dbReference type="HAMAP" id="MF_00270">
    <property type="entry name" value="Ribosomal_bS18"/>
    <property type="match status" value="1"/>
</dbReference>
<dbReference type="InterPro" id="IPR001648">
    <property type="entry name" value="Ribosomal_bS18"/>
</dbReference>
<dbReference type="InterPro" id="IPR018275">
    <property type="entry name" value="Ribosomal_bS18_CS"/>
</dbReference>
<dbReference type="InterPro" id="IPR036870">
    <property type="entry name" value="Ribosomal_bS18_sf"/>
</dbReference>
<dbReference type="NCBIfam" id="TIGR00165">
    <property type="entry name" value="S18"/>
    <property type="match status" value="1"/>
</dbReference>
<dbReference type="PANTHER" id="PTHR13479">
    <property type="entry name" value="30S RIBOSOMAL PROTEIN S18"/>
    <property type="match status" value="1"/>
</dbReference>
<dbReference type="PANTHER" id="PTHR13479:SF62">
    <property type="entry name" value="SMALL RIBOSOMAL SUBUNIT PROTEIN BS18A"/>
    <property type="match status" value="1"/>
</dbReference>
<dbReference type="Pfam" id="PF01084">
    <property type="entry name" value="Ribosomal_S18"/>
    <property type="match status" value="1"/>
</dbReference>
<dbReference type="PRINTS" id="PR00974">
    <property type="entry name" value="RIBOSOMALS18"/>
</dbReference>
<dbReference type="SUPFAM" id="SSF46911">
    <property type="entry name" value="Ribosomal protein S18"/>
    <property type="match status" value="1"/>
</dbReference>
<dbReference type="PROSITE" id="PS00057">
    <property type="entry name" value="RIBOSOMAL_S18"/>
    <property type="match status" value="1"/>
</dbReference>
<sequence length="78" mass="8913">MTKAPARKPKKKVCVFCKEGITYVDYKDTNLLRKFISDRGKIRARRVTGNCAQHQRDVATAIKNSREMALLPYTNAAR</sequence>